<reference key="1">
    <citation type="journal article" date="2005" name="BMC Genomics">
        <title>Characterization of 954 bovine full-CDS cDNA sequences.</title>
        <authorList>
            <person name="Harhay G.P."/>
            <person name="Sonstegard T.S."/>
            <person name="Keele J.W."/>
            <person name="Heaton M.P."/>
            <person name="Clawson M.L."/>
            <person name="Snelling W.M."/>
            <person name="Wiedmann R.T."/>
            <person name="Van Tassell C.P."/>
            <person name="Smith T.P.L."/>
        </authorList>
    </citation>
    <scope>NUCLEOTIDE SEQUENCE [LARGE SCALE MRNA]</scope>
</reference>
<reference key="2">
    <citation type="submission" date="2005-08" db="EMBL/GenBank/DDBJ databases">
        <authorList>
            <consortium name="NIH - Mammalian Gene Collection (MGC) project"/>
        </authorList>
    </citation>
    <scope>NUCLEOTIDE SEQUENCE [LARGE SCALE MRNA]</scope>
    <source>
        <strain>Crossbred X Angus</strain>
        <tissue>Ileum</tissue>
    </source>
</reference>
<accession>Q3T133</accession>
<accession>Q5E957</accession>
<dbReference type="EMBL" id="BT021063">
    <property type="protein sequence ID" value="AAX09080.1"/>
    <property type="molecule type" value="mRNA"/>
</dbReference>
<dbReference type="EMBL" id="BC102145">
    <property type="protein sequence ID" value="AAI02146.1"/>
    <property type="molecule type" value="mRNA"/>
</dbReference>
<dbReference type="RefSeq" id="NP_001029984.1">
    <property type="nucleotide sequence ID" value="NM_001034812.2"/>
</dbReference>
<dbReference type="PDB" id="4J73">
    <property type="method" value="X-ray"/>
    <property type="resolution" value="1.44 A"/>
    <property type="chains" value="B=229-235"/>
</dbReference>
<dbReference type="PDBsum" id="4J73"/>
<dbReference type="SMR" id="Q3T133"/>
<dbReference type="FunCoup" id="Q3T133">
    <property type="interactions" value="2429"/>
</dbReference>
<dbReference type="IntAct" id="Q3T133">
    <property type="interactions" value="4"/>
</dbReference>
<dbReference type="MINT" id="Q3T133"/>
<dbReference type="STRING" id="9913.ENSBTAP00000001830"/>
<dbReference type="GlyCosmos" id="Q3T133">
    <property type="glycosylation" value="1 site, No reported glycans"/>
</dbReference>
<dbReference type="GlyGen" id="Q3T133">
    <property type="glycosylation" value="1 site"/>
</dbReference>
<dbReference type="PaxDb" id="9913-ENSBTAP00000001830"/>
<dbReference type="PeptideAtlas" id="Q3T133"/>
<dbReference type="Ensembl" id="ENSBTAT00000001830.7">
    <property type="protein sequence ID" value="ENSBTAP00000001830.5"/>
    <property type="gene ID" value="ENSBTAG00000001394.7"/>
</dbReference>
<dbReference type="GeneID" id="618580"/>
<dbReference type="KEGG" id="bta:618580"/>
<dbReference type="CTD" id="54732"/>
<dbReference type="VEuPathDB" id="HostDB:ENSBTAG00000001394"/>
<dbReference type="eggNOG" id="KOG1690">
    <property type="taxonomic scope" value="Eukaryota"/>
</dbReference>
<dbReference type="GeneTree" id="ENSGT00940000159747"/>
<dbReference type="HOGENOM" id="CLU_066963_2_2_1"/>
<dbReference type="InParanoid" id="Q3T133"/>
<dbReference type="OMA" id="AGIQFWH"/>
<dbReference type="OrthoDB" id="3427at2759"/>
<dbReference type="TreeFam" id="TF314123"/>
<dbReference type="Reactome" id="R-BTA-6807878">
    <property type="pathway name" value="COPI-mediated anterograde transport"/>
</dbReference>
<dbReference type="Reactome" id="R-BTA-6811434">
    <property type="pathway name" value="COPI-dependent Golgi-to-ER retrograde traffic"/>
</dbReference>
<dbReference type="EvolutionaryTrace" id="Q3T133"/>
<dbReference type="Proteomes" id="UP000009136">
    <property type="component" value="Chromosome 7"/>
</dbReference>
<dbReference type="Bgee" id="ENSBTAG00000001394">
    <property type="expression patterns" value="Expressed in saliva-secreting gland and 103 other cell types or tissues"/>
</dbReference>
<dbReference type="GO" id="GO:0030134">
    <property type="term" value="C:COPII-coated ER to Golgi transport vesicle"/>
    <property type="evidence" value="ECO:0000318"/>
    <property type="project" value="GO_Central"/>
</dbReference>
<dbReference type="GO" id="GO:0005783">
    <property type="term" value="C:endoplasmic reticulum"/>
    <property type="evidence" value="ECO:0000318"/>
    <property type="project" value="GO_Central"/>
</dbReference>
<dbReference type="GO" id="GO:0005789">
    <property type="term" value="C:endoplasmic reticulum membrane"/>
    <property type="evidence" value="ECO:0007669"/>
    <property type="project" value="UniProtKB-SubCell"/>
</dbReference>
<dbReference type="GO" id="GO:0005793">
    <property type="term" value="C:endoplasmic reticulum-Golgi intermediate compartment"/>
    <property type="evidence" value="ECO:0000318"/>
    <property type="project" value="GO_Central"/>
</dbReference>
<dbReference type="GO" id="GO:0033116">
    <property type="term" value="C:endoplasmic reticulum-Golgi intermediate compartment membrane"/>
    <property type="evidence" value="ECO:0007669"/>
    <property type="project" value="UniProtKB-SubCell"/>
</dbReference>
<dbReference type="GO" id="GO:0005794">
    <property type="term" value="C:Golgi apparatus"/>
    <property type="evidence" value="ECO:0000318"/>
    <property type="project" value="GO_Central"/>
</dbReference>
<dbReference type="GO" id="GO:0000139">
    <property type="term" value="C:Golgi membrane"/>
    <property type="evidence" value="ECO:0007669"/>
    <property type="project" value="GOC"/>
</dbReference>
<dbReference type="GO" id="GO:0008021">
    <property type="term" value="C:synaptic vesicle"/>
    <property type="evidence" value="ECO:0007669"/>
    <property type="project" value="Ensembl"/>
</dbReference>
<dbReference type="GO" id="GO:0019905">
    <property type="term" value="F:syntaxin binding"/>
    <property type="evidence" value="ECO:0007669"/>
    <property type="project" value="Ensembl"/>
</dbReference>
<dbReference type="GO" id="GO:0048205">
    <property type="term" value="P:COPI coating of Golgi vesicle"/>
    <property type="evidence" value="ECO:0000250"/>
    <property type="project" value="UniProtKB"/>
</dbReference>
<dbReference type="GO" id="GO:0006888">
    <property type="term" value="P:endoplasmic reticulum to Golgi vesicle-mediated transport"/>
    <property type="evidence" value="ECO:0000318"/>
    <property type="project" value="GO_Central"/>
</dbReference>
<dbReference type="GO" id="GO:0007030">
    <property type="term" value="P:Golgi organization"/>
    <property type="evidence" value="ECO:0000250"/>
    <property type="project" value="UniProtKB"/>
</dbReference>
<dbReference type="GO" id="GO:0006886">
    <property type="term" value="P:intracellular protein transport"/>
    <property type="evidence" value="ECO:0000318"/>
    <property type="project" value="GO_Central"/>
</dbReference>
<dbReference type="GO" id="GO:0010638">
    <property type="term" value="P:positive regulation of organelle organization"/>
    <property type="evidence" value="ECO:0000250"/>
    <property type="project" value="UniProtKB"/>
</dbReference>
<dbReference type="InterPro" id="IPR015720">
    <property type="entry name" value="Emp24-like"/>
</dbReference>
<dbReference type="InterPro" id="IPR009038">
    <property type="entry name" value="GOLD_dom"/>
</dbReference>
<dbReference type="PANTHER" id="PTHR22811">
    <property type="entry name" value="TRANSMEMBRANE EMP24 DOMAIN-CONTAINING PROTEIN"/>
    <property type="match status" value="1"/>
</dbReference>
<dbReference type="Pfam" id="PF01105">
    <property type="entry name" value="EMP24_GP25L"/>
    <property type="match status" value="1"/>
</dbReference>
<dbReference type="SMART" id="SM01190">
    <property type="entry name" value="EMP24_GP25L"/>
    <property type="match status" value="1"/>
</dbReference>
<dbReference type="PROSITE" id="PS50866">
    <property type="entry name" value="GOLD"/>
    <property type="match status" value="1"/>
</dbReference>
<protein>
    <recommendedName>
        <fullName>Transmembrane emp24 domain-containing protein 9</fullName>
    </recommendedName>
    <alternativeName>
        <fullName>p24 family protein alpha-2</fullName>
        <shortName>p24alpha2</shortName>
    </alternativeName>
</protein>
<name>TMED9_BOVIN</name>
<organism>
    <name type="scientific">Bos taurus</name>
    <name type="common">Bovine</name>
    <dbReference type="NCBI Taxonomy" id="9913"/>
    <lineage>
        <taxon>Eukaryota</taxon>
        <taxon>Metazoa</taxon>
        <taxon>Chordata</taxon>
        <taxon>Craniata</taxon>
        <taxon>Vertebrata</taxon>
        <taxon>Euteleostomi</taxon>
        <taxon>Mammalia</taxon>
        <taxon>Eutheria</taxon>
        <taxon>Laurasiatheria</taxon>
        <taxon>Artiodactyla</taxon>
        <taxon>Ruminantia</taxon>
        <taxon>Pecora</taxon>
        <taxon>Bovidae</taxon>
        <taxon>Bovinae</taxon>
        <taxon>Bos</taxon>
    </lineage>
</organism>
<comment type="function">
    <text evidence="1">Appears to be involved in vesicular protein trafficking, mainly in the early secretory pathway. In COPI vesicle-mediated retrograde transport involved in the coatomer recruitment to membranes of the early secretory pathway. Increases coatomer-dependent activity of ARFGAP2. Thought to play a crucial role in the specific retention of p24 complexes in cis-Golgi membranes; specifically contributes to the coupled localization of TMED2 and TMED10 in the cis-Golgi network. May be involved in organization of intracellular membranes, such as of the ER-Golgi intermediate compartment and the Golgi apparatus. Involved in ER localization of PTPN2 (By similarity).</text>
</comment>
<comment type="subunit">
    <text evidence="1">Monomer and homodimer in endoplasmic reticulum. Predominantly monomeric and to lesser extent homodimeric in endoplasmic reticulum-Golgi intermediate compartment and cis-Golgi network. Probably oligomerizes with other members of the EMP24/GP25L family such as TMED2, TMED7 and TMED10. Interacts with TMED5. Interacts (via C-terminus) with COPG1; the interaction involves dimeric TMED9. Interacts with PTPN2 and SPAST. Interacts with STX17; the interaction is direct (By similarity).</text>
</comment>
<comment type="subcellular location">
    <subcellularLocation>
        <location evidence="1">Endoplasmic reticulum membrane</location>
        <topology evidence="1">Single-pass type I membrane protein</topology>
    </subcellularLocation>
    <subcellularLocation>
        <location evidence="1">Golgi apparatus</location>
        <location evidence="1">cis-Golgi network membrane</location>
        <topology evidence="1">Single-pass type I membrane protein</topology>
    </subcellularLocation>
    <subcellularLocation>
        <location evidence="1">Endoplasmic reticulum-Golgi intermediate compartment membrane</location>
        <topology evidence="1">Single-pass type I membrane protein</topology>
    </subcellularLocation>
    <subcellularLocation>
        <location evidence="1">Golgi apparatus</location>
        <location evidence="1">trans-Golgi network membrane</location>
        <topology evidence="1">Single-pass type I membrane protein</topology>
    </subcellularLocation>
    <text evidence="1">Cycles between compartments of the early secretatory pathway.</text>
</comment>
<comment type="PTM">
    <text evidence="1">N-linked glycosylated containing high mannose.</text>
</comment>
<comment type="similarity">
    <text evidence="5">Belongs to the EMP24/GP25L family.</text>
</comment>
<gene>
    <name type="primary">TMED9</name>
</gene>
<keyword id="KW-0002">3D-structure</keyword>
<keyword id="KW-0007">Acetylation</keyword>
<keyword id="KW-0175">Coiled coil</keyword>
<keyword id="KW-0256">Endoplasmic reticulum</keyword>
<keyword id="KW-0325">Glycoprotein</keyword>
<keyword id="KW-0333">Golgi apparatus</keyword>
<keyword id="KW-0472">Membrane</keyword>
<keyword id="KW-0653">Protein transport</keyword>
<keyword id="KW-1185">Reference proteome</keyword>
<keyword id="KW-0732">Signal</keyword>
<keyword id="KW-0812">Transmembrane</keyword>
<keyword id="KW-1133">Transmembrane helix</keyword>
<keyword id="KW-0813">Transport</keyword>
<proteinExistence type="evidence at protein level"/>
<evidence type="ECO:0000250" key="1"/>
<evidence type="ECO:0000250" key="2">
    <source>
        <dbReference type="UniProtKB" id="Q99KF1"/>
    </source>
</evidence>
<evidence type="ECO:0000255" key="3"/>
<evidence type="ECO:0000255" key="4">
    <source>
        <dbReference type="PROSITE-ProRule" id="PRU00096"/>
    </source>
</evidence>
<evidence type="ECO:0000305" key="5"/>
<evidence type="ECO:0007829" key="6">
    <source>
        <dbReference type="PDB" id="4J73"/>
    </source>
</evidence>
<feature type="signal peptide" evidence="1">
    <location>
        <begin position="1"/>
        <end position="37"/>
    </location>
</feature>
<feature type="chain" id="PRO_0000042789" description="Transmembrane emp24 domain-containing protein 9">
    <location>
        <begin position="38"/>
        <end position="235"/>
    </location>
</feature>
<feature type="topological domain" description="Lumenal" evidence="3">
    <location>
        <begin position="38"/>
        <end position="201"/>
    </location>
</feature>
<feature type="transmembrane region" description="Helical" evidence="3">
    <location>
        <begin position="202"/>
        <end position="222"/>
    </location>
</feature>
<feature type="topological domain" description="Cytoplasmic" evidence="3">
    <location>
        <begin position="223"/>
        <end position="235"/>
    </location>
</feature>
<feature type="domain" description="GOLD" evidence="4">
    <location>
        <begin position="47"/>
        <end position="145"/>
    </location>
</feature>
<feature type="region of interest" description="Required for interaction with STX17" evidence="1">
    <location>
        <begin position="121"/>
        <end position="160"/>
    </location>
</feature>
<feature type="coiled-coil region" evidence="3">
    <location>
        <begin position="154"/>
        <end position="184"/>
    </location>
</feature>
<feature type="short sequence motif" description="COPI vesicle coat-binding" evidence="3">
    <location>
        <begin position="228"/>
        <end position="235"/>
    </location>
</feature>
<feature type="short sequence motif" description="COPII vesicle coat-binding" evidence="3">
    <location>
        <begin position="228"/>
        <end position="229"/>
    </location>
</feature>
<feature type="modified residue" description="N6-acetyllysine" evidence="2">
    <location>
        <position position="160"/>
    </location>
</feature>
<feature type="glycosylation site" description="N-linked (GlcNAc...) asparagine" evidence="3">
    <location>
        <position position="125"/>
    </location>
</feature>
<feature type="sequence conflict" description="In Ref. 1; AAX09080." evidence="5" ref="1">
    <original>F</original>
    <variation>I</variation>
    <location>
        <position position="110"/>
    </location>
</feature>
<feature type="helix" evidence="6">
    <location>
        <begin position="231"/>
        <end position="234"/>
    </location>
</feature>
<sequence length="235" mass="27298">MAAERSLWVVGLCPGSRLGRVVRVLLLLLWFAARGGALYFHIGETEKKCFIEEIPDETMVIGNYRTQLYDKQREEYQPATPGLGMFVEVKDPEDKVILARQYGSEGRFTFTSHTPGEHQICLHSNSTKFSLFAGGMLRVHLDIQVGEHANDYAEIAAKDKLSELQLRVRQLVEQVEQIQKEQNYQRWREERFRQTSESTNQRVLWWSILQTLILVAIGVWQMRHLKSFFEAKKLV</sequence>